<feature type="chain" id="PRO_1000087123" description="Large ribosomal subunit protein uL14">
    <location>
        <begin position="1"/>
        <end position="122"/>
    </location>
</feature>
<keyword id="KW-0687">Ribonucleoprotein</keyword>
<keyword id="KW-0689">Ribosomal protein</keyword>
<keyword id="KW-0694">RNA-binding</keyword>
<keyword id="KW-0699">rRNA-binding</keyword>
<gene>
    <name evidence="1" type="primary">rplN</name>
    <name type="ordered locus">CBUD_1844</name>
</gene>
<organism>
    <name type="scientific">Coxiella burnetii (strain Dugway 5J108-111)</name>
    <dbReference type="NCBI Taxonomy" id="434922"/>
    <lineage>
        <taxon>Bacteria</taxon>
        <taxon>Pseudomonadati</taxon>
        <taxon>Pseudomonadota</taxon>
        <taxon>Gammaproteobacteria</taxon>
        <taxon>Legionellales</taxon>
        <taxon>Coxiellaceae</taxon>
        <taxon>Coxiella</taxon>
    </lineage>
</organism>
<comment type="function">
    <text evidence="1">Binds to 23S rRNA. Forms part of two intersubunit bridges in the 70S ribosome.</text>
</comment>
<comment type="subunit">
    <text evidence="1">Part of the 50S ribosomal subunit. Forms a cluster with proteins L3 and L19. In the 70S ribosome, L14 and L19 interact and together make contacts with the 16S rRNA in bridges B5 and B8.</text>
</comment>
<comment type="similarity">
    <text evidence="1">Belongs to the universal ribosomal protein uL14 family.</text>
</comment>
<sequence>MIQTQSIVDVADNSGARRVMCIKVLGGSKRRYANIGDVIKVSIKEAIPRGKVKKGDVMHAVVVRTRKGVRRNDGSLIRFDNNAVVLLNNQLQLVGTRVFGPVVRELRTDKFMKIISLALEVL</sequence>
<proteinExistence type="inferred from homology"/>
<dbReference type="EMBL" id="CP000733">
    <property type="protein sequence ID" value="ABS77961.1"/>
    <property type="molecule type" value="Genomic_DNA"/>
</dbReference>
<dbReference type="RefSeq" id="WP_005771526.1">
    <property type="nucleotide sequence ID" value="NC_009727.1"/>
</dbReference>
<dbReference type="SMR" id="A9KD21"/>
<dbReference type="KEGG" id="cbd:CBUD_1844"/>
<dbReference type="HOGENOM" id="CLU_095071_2_1_6"/>
<dbReference type="Proteomes" id="UP000008555">
    <property type="component" value="Chromosome"/>
</dbReference>
<dbReference type="GO" id="GO:0022625">
    <property type="term" value="C:cytosolic large ribosomal subunit"/>
    <property type="evidence" value="ECO:0007669"/>
    <property type="project" value="TreeGrafter"/>
</dbReference>
<dbReference type="GO" id="GO:0070180">
    <property type="term" value="F:large ribosomal subunit rRNA binding"/>
    <property type="evidence" value="ECO:0007669"/>
    <property type="project" value="TreeGrafter"/>
</dbReference>
<dbReference type="GO" id="GO:0003735">
    <property type="term" value="F:structural constituent of ribosome"/>
    <property type="evidence" value="ECO:0007669"/>
    <property type="project" value="InterPro"/>
</dbReference>
<dbReference type="GO" id="GO:0006412">
    <property type="term" value="P:translation"/>
    <property type="evidence" value="ECO:0007669"/>
    <property type="project" value="UniProtKB-UniRule"/>
</dbReference>
<dbReference type="CDD" id="cd00337">
    <property type="entry name" value="Ribosomal_uL14"/>
    <property type="match status" value="1"/>
</dbReference>
<dbReference type="FunFam" id="2.40.150.20:FF:000001">
    <property type="entry name" value="50S ribosomal protein L14"/>
    <property type="match status" value="1"/>
</dbReference>
<dbReference type="Gene3D" id="2.40.150.20">
    <property type="entry name" value="Ribosomal protein L14"/>
    <property type="match status" value="1"/>
</dbReference>
<dbReference type="HAMAP" id="MF_01367">
    <property type="entry name" value="Ribosomal_uL14"/>
    <property type="match status" value="1"/>
</dbReference>
<dbReference type="InterPro" id="IPR000218">
    <property type="entry name" value="Ribosomal_uL14"/>
</dbReference>
<dbReference type="InterPro" id="IPR005745">
    <property type="entry name" value="Ribosomal_uL14_bac-type"/>
</dbReference>
<dbReference type="InterPro" id="IPR019972">
    <property type="entry name" value="Ribosomal_uL14_CS"/>
</dbReference>
<dbReference type="InterPro" id="IPR036853">
    <property type="entry name" value="Ribosomal_uL14_sf"/>
</dbReference>
<dbReference type="NCBIfam" id="TIGR01067">
    <property type="entry name" value="rplN_bact"/>
    <property type="match status" value="1"/>
</dbReference>
<dbReference type="PANTHER" id="PTHR11761">
    <property type="entry name" value="50S/60S RIBOSOMAL PROTEIN L14/L23"/>
    <property type="match status" value="1"/>
</dbReference>
<dbReference type="PANTHER" id="PTHR11761:SF3">
    <property type="entry name" value="LARGE RIBOSOMAL SUBUNIT PROTEIN UL14M"/>
    <property type="match status" value="1"/>
</dbReference>
<dbReference type="Pfam" id="PF00238">
    <property type="entry name" value="Ribosomal_L14"/>
    <property type="match status" value="1"/>
</dbReference>
<dbReference type="SMART" id="SM01374">
    <property type="entry name" value="Ribosomal_L14"/>
    <property type="match status" value="1"/>
</dbReference>
<dbReference type="SUPFAM" id="SSF50193">
    <property type="entry name" value="Ribosomal protein L14"/>
    <property type="match status" value="1"/>
</dbReference>
<dbReference type="PROSITE" id="PS00049">
    <property type="entry name" value="RIBOSOMAL_L14"/>
    <property type="match status" value="1"/>
</dbReference>
<evidence type="ECO:0000255" key="1">
    <source>
        <dbReference type="HAMAP-Rule" id="MF_01367"/>
    </source>
</evidence>
<evidence type="ECO:0000305" key="2"/>
<reference key="1">
    <citation type="journal article" date="2009" name="Infect. Immun.">
        <title>Comparative genomics reveal extensive transposon-mediated genomic plasticity and diversity among potential effector proteins within the genus Coxiella.</title>
        <authorList>
            <person name="Beare P.A."/>
            <person name="Unsworth N."/>
            <person name="Andoh M."/>
            <person name="Voth D.E."/>
            <person name="Omsland A."/>
            <person name="Gilk S.D."/>
            <person name="Williams K.P."/>
            <person name="Sobral B.W."/>
            <person name="Kupko J.J. III"/>
            <person name="Porcella S.F."/>
            <person name="Samuel J.E."/>
            <person name="Heinzen R.A."/>
        </authorList>
    </citation>
    <scope>NUCLEOTIDE SEQUENCE [LARGE SCALE GENOMIC DNA]</scope>
    <source>
        <strain>Dugway 5J108-111</strain>
    </source>
</reference>
<accession>A9KD21</accession>
<name>RL14_COXBN</name>
<protein>
    <recommendedName>
        <fullName evidence="1">Large ribosomal subunit protein uL14</fullName>
    </recommendedName>
    <alternativeName>
        <fullName evidence="2">50S ribosomal protein L14</fullName>
    </alternativeName>
</protein>